<feature type="chain" id="PRO_1000047374" description="Glycine--tRNA ligase">
    <location>
        <begin position="1"/>
        <end position="466"/>
    </location>
</feature>
<feature type="binding site" evidence="1">
    <location>
        <position position="104"/>
    </location>
    <ligand>
        <name>substrate</name>
    </ligand>
</feature>
<feature type="binding site" evidence="1">
    <location>
        <position position="178"/>
    </location>
    <ligand>
        <name>substrate</name>
    </ligand>
</feature>
<feature type="binding site" evidence="1">
    <location>
        <begin position="210"/>
        <end position="212"/>
    </location>
    <ligand>
        <name>ATP</name>
        <dbReference type="ChEBI" id="CHEBI:30616"/>
    </ligand>
</feature>
<feature type="binding site" evidence="1">
    <location>
        <begin position="220"/>
        <end position="225"/>
    </location>
    <ligand>
        <name>ATP</name>
        <dbReference type="ChEBI" id="CHEBI:30616"/>
    </ligand>
</feature>
<feature type="binding site" evidence="1">
    <location>
        <begin position="225"/>
        <end position="229"/>
    </location>
    <ligand>
        <name>substrate</name>
    </ligand>
</feature>
<feature type="binding site" evidence="1">
    <location>
        <begin position="294"/>
        <end position="295"/>
    </location>
    <ligand>
        <name>ATP</name>
        <dbReference type="ChEBI" id="CHEBI:30616"/>
    </ligand>
</feature>
<feature type="binding site" evidence="1">
    <location>
        <begin position="334"/>
        <end position="338"/>
    </location>
    <ligand>
        <name>substrate</name>
    </ligand>
</feature>
<feature type="binding site" evidence="1">
    <location>
        <begin position="338"/>
        <end position="341"/>
    </location>
    <ligand>
        <name>ATP</name>
        <dbReference type="ChEBI" id="CHEBI:30616"/>
    </ligand>
</feature>
<accession>A4ITQ8</accession>
<dbReference type="EC" id="6.1.1.14" evidence="1"/>
<dbReference type="EMBL" id="CP000557">
    <property type="protein sequence ID" value="ABO68712.1"/>
    <property type="molecule type" value="Genomic_DNA"/>
</dbReference>
<dbReference type="SMR" id="A4ITQ8"/>
<dbReference type="KEGG" id="gtn:GTNG_3375"/>
<dbReference type="eggNOG" id="COG0423">
    <property type="taxonomic scope" value="Bacteria"/>
</dbReference>
<dbReference type="HOGENOM" id="CLU_015515_2_1_9"/>
<dbReference type="Proteomes" id="UP000001578">
    <property type="component" value="Chromosome"/>
</dbReference>
<dbReference type="GO" id="GO:0005737">
    <property type="term" value="C:cytoplasm"/>
    <property type="evidence" value="ECO:0007669"/>
    <property type="project" value="UniProtKB-SubCell"/>
</dbReference>
<dbReference type="GO" id="GO:0005524">
    <property type="term" value="F:ATP binding"/>
    <property type="evidence" value="ECO:0007669"/>
    <property type="project" value="UniProtKB-UniRule"/>
</dbReference>
<dbReference type="GO" id="GO:0140096">
    <property type="term" value="F:catalytic activity, acting on a protein"/>
    <property type="evidence" value="ECO:0007669"/>
    <property type="project" value="UniProtKB-ARBA"/>
</dbReference>
<dbReference type="GO" id="GO:0004820">
    <property type="term" value="F:glycine-tRNA ligase activity"/>
    <property type="evidence" value="ECO:0000250"/>
    <property type="project" value="UniProtKB"/>
</dbReference>
<dbReference type="GO" id="GO:0046983">
    <property type="term" value="F:protein dimerization activity"/>
    <property type="evidence" value="ECO:0000250"/>
    <property type="project" value="UniProtKB"/>
</dbReference>
<dbReference type="GO" id="GO:0016740">
    <property type="term" value="F:transferase activity"/>
    <property type="evidence" value="ECO:0007669"/>
    <property type="project" value="UniProtKB-ARBA"/>
</dbReference>
<dbReference type="GO" id="GO:0006426">
    <property type="term" value="P:glycyl-tRNA aminoacylation"/>
    <property type="evidence" value="ECO:0007669"/>
    <property type="project" value="UniProtKB-UniRule"/>
</dbReference>
<dbReference type="CDD" id="cd00774">
    <property type="entry name" value="GlyRS-like_core"/>
    <property type="match status" value="1"/>
</dbReference>
<dbReference type="CDD" id="cd00858">
    <property type="entry name" value="GlyRS_anticodon"/>
    <property type="match status" value="1"/>
</dbReference>
<dbReference type="FunFam" id="3.40.50.800:FF:000002">
    <property type="entry name" value="Glycine--tRNA ligase"/>
    <property type="match status" value="1"/>
</dbReference>
<dbReference type="Gene3D" id="3.30.40.230">
    <property type="match status" value="1"/>
</dbReference>
<dbReference type="Gene3D" id="3.40.50.800">
    <property type="entry name" value="Anticodon-binding domain"/>
    <property type="match status" value="1"/>
</dbReference>
<dbReference type="Gene3D" id="3.30.930.10">
    <property type="entry name" value="Bira Bifunctional Protein, Domain 2"/>
    <property type="match status" value="1"/>
</dbReference>
<dbReference type="HAMAP" id="MF_00253_B">
    <property type="entry name" value="Gly_tRNA_synth_B"/>
    <property type="match status" value="1"/>
</dbReference>
<dbReference type="InterPro" id="IPR002314">
    <property type="entry name" value="aa-tRNA-synt_IIb"/>
</dbReference>
<dbReference type="InterPro" id="IPR006195">
    <property type="entry name" value="aa-tRNA-synth_II"/>
</dbReference>
<dbReference type="InterPro" id="IPR045864">
    <property type="entry name" value="aa-tRNA-synth_II/BPL/LPL"/>
</dbReference>
<dbReference type="InterPro" id="IPR004154">
    <property type="entry name" value="Anticodon-bd"/>
</dbReference>
<dbReference type="InterPro" id="IPR036621">
    <property type="entry name" value="Anticodon-bd_dom_sf"/>
</dbReference>
<dbReference type="InterPro" id="IPR027031">
    <property type="entry name" value="Gly-tRNA_synthase/POLG2"/>
</dbReference>
<dbReference type="InterPro" id="IPR022961">
    <property type="entry name" value="Gly_tRNA_ligase_bac"/>
</dbReference>
<dbReference type="InterPro" id="IPR033731">
    <property type="entry name" value="GlyRS-like_core"/>
</dbReference>
<dbReference type="InterPro" id="IPR002315">
    <property type="entry name" value="tRNA-synt_gly"/>
</dbReference>
<dbReference type="NCBIfam" id="TIGR00389">
    <property type="entry name" value="glyS_dimeric"/>
    <property type="match status" value="1"/>
</dbReference>
<dbReference type="NCBIfam" id="NF003211">
    <property type="entry name" value="PRK04173.1"/>
    <property type="match status" value="1"/>
</dbReference>
<dbReference type="PANTHER" id="PTHR10745:SF8">
    <property type="entry name" value="DNA POLYMERASE SUBUNIT GAMMA-2, MITOCHONDRIAL"/>
    <property type="match status" value="1"/>
</dbReference>
<dbReference type="PANTHER" id="PTHR10745">
    <property type="entry name" value="GLYCYL-TRNA SYNTHETASE/DNA POLYMERASE SUBUNIT GAMMA-2"/>
    <property type="match status" value="1"/>
</dbReference>
<dbReference type="Pfam" id="PF03129">
    <property type="entry name" value="HGTP_anticodon"/>
    <property type="match status" value="1"/>
</dbReference>
<dbReference type="Pfam" id="PF00587">
    <property type="entry name" value="tRNA-synt_2b"/>
    <property type="match status" value="1"/>
</dbReference>
<dbReference type="PRINTS" id="PR01043">
    <property type="entry name" value="TRNASYNTHGLY"/>
</dbReference>
<dbReference type="SUPFAM" id="SSF52954">
    <property type="entry name" value="Class II aaRS ABD-related"/>
    <property type="match status" value="1"/>
</dbReference>
<dbReference type="SUPFAM" id="SSF55681">
    <property type="entry name" value="Class II aaRS and biotin synthetases"/>
    <property type="match status" value="1"/>
</dbReference>
<dbReference type="PROSITE" id="PS50862">
    <property type="entry name" value="AA_TRNA_LIGASE_II"/>
    <property type="match status" value="1"/>
</dbReference>
<comment type="function">
    <text evidence="1">Catalyzes the attachment of glycine to tRNA(Gly).</text>
</comment>
<comment type="catalytic activity">
    <reaction evidence="1">
        <text>tRNA(Gly) + glycine + ATP = glycyl-tRNA(Gly) + AMP + diphosphate</text>
        <dbReference type="Rhea" id="RHEA:16013"/>
        <dbReference type="Rhea" id="RHEA-COMP:9664"/>
        <dbReference type="Rhea" id="RHEA-COMP:9683"/>
        <dbReference type="ChEBI" id="CHEBI:30616"/>
        <dbReference type="ChEBI" id="CHEBI:33019"/>
        <dbReference type="ChEBI" id="CHEBI:57305"/>
        <dbReference type="ChEBI" id="CHEBI:78442"/>
        <dbReference type="ChEBI" id="CHEBI:78522"/>
        <dbReference type="ChEBI" id="CHEBI:456215"/>
        <dbReference type="EC" id="6.1.1.14"/>
    </reaction>
</comment>
<comment type="subunit">
    <text evidence="1">Homodimer.</text>
</comment>
<comment type="subcellular location">
    <subcellularLocation>
        <location evidence="1">Cytoplasm</location>
    </subcellularLocation>
</comment>
<comment type="similarity">
    <text evidence="1">Belongs to the class-II aminoacyl-tRNA synthetase family.</text>
</comment>
<evidence type="ECO:0000255" key="1">
    <source>
        <dbReference type="HAMAP-Rule" id="MF_00253"/>
    </source>
</evidence>
<gene>
    <name evidence="1" type="primary">glyQS</name>
    <name type="ordered locus">GTNG_3375</name>
</gene>
<reference key="1">
    <citation type="journal article" date="2007" name="Proc. Natl. Acad. Sci. U.S.A.">
        <title>Genome and proteome of long-chain alkane degrading Geobacillus thermodenitrificans NG80-2 isolated from a deep-subsurface oil reservoir.</title>
        <authorList>
            <person name="Feng L."/>
            <person name="Wang W."/>
            <person name="Cheng J."/>
            <person name="Ren Y."/>
            <person name="Zhao G."/>
            <person name="Gao C."/>
            <person name="Tang Y."/>
            <person name="Liu X."/>
            <person name="Han W."/>
            <person name="Peng X."/>
            <person name="Liu R."/>
            <person name="Wang L."/>
        </authorList>
    </citation>
    <scope>NUCLEOTIDE SEQUENCE [LARGE SCALE GENOMIC DNA]</scope>
    <source>
        <strain>NG80-2</strain>
    </source>
</reference>
<name>SYG_GEOTN</name>
<organism>
    <name type="scientific">Geobacillus thermodenitrificans (strain NG80-2)</name>
    <dbReference type="NCBI Taxonomy" id="420246"/>
    <lineage>
        <taxon>Bacteria</taxon>
        <taxon>Bacillati</taxon>
        <taxon>Bacillota</taxon>
        <taxon>Bacilli</taxon>
        <taxon>Bacillales</taxon>
        <taxon>Anoxybacillaceae</taxon>
        <taxon>Geobacillus</taxon>
    </lineage>
</organism>
<protein>
    <recommendedName>
        <fullName evidence="1">Glycine--tRNA ligase</fullName>
        <ecNumber evidence="1">6.1.1.14</ecNumber>
    </recommendedName>
    <alternativeName>
        <fullName evidence="1">Glycyl-tRNA synthetase</fullName>
        <shortName evidence="1">GlyRS</shortName>
    </alternativeName>
</protein>
<keyword id="KW-0030">Aminoacyl-tRNA synthetase</keyword>
<keyword id="KW-0067">ATP-binding</keyword>
<keyword id="KW-0963">Cytoplasm</keyword>
<keyword id="KW-0436">Ligase</keyword>
<keyword id="KW-0547">Nucleotide-binding</keyword>
<keyword id="KW-0648">Protein biosynthesis</keyword>
<sequence>MEEDDDMAATMEEIVAHAKHRGFVFPGSEIYGGLANTWDYGPLGVELKNNIKRAWWKKFVQESPHNVGLDAAILMNPKTWEASGHLGNFNDPMVDCKQCKARHRADKLIEQALEEKGIEMVVDGLPLAKMEELIREYDIACPECGSRDFTNVRQFNLMFKTYQGVTESSANEIYLRPETAQGIFVNFKNVQRTMRKKLPFGIAQIGKSFRNEITPGNFTFRTREFEQMELEFFCKPGEELKWFDYWKQFCKEWLLSLGMNEEHIRLRDHTKEELSHYSNATTDIEYQFPFGWGELWGIASRTDYDLKQHMEHSGEDFHYLDQETNERYIPYCIEPSLGADRVTLAFMIDAYDEEELEDGTTRTVMHLHPALAPYKAAVLPLSKKLGDGARRIYEELAKHFMVDYDETGSIGKRYRRQDEIGTPFCITYDFESEQDGQVTVRDRDTMEQVRLPIGELKAFLDKKIAF</sequence>
<proteinExistence type="inferred from homology"/>